<accession>Q4V842</accession>
<accession>Q68F52</accession>
<feature type="chain" id="PRO_0000287465" description="G patch domain-containing protein 4">
    <location>
        <begin position="1"/>
        <end position="324"/>
    </location>
</feature>
<feature type="domain" description="G-patch" evidence="1">
    <location>
        <begin position="11"/>
        <end position="57"/>
    </location>
</feature>
<feature type="region of interest" description="Disordered" evidence="2">
    <location>
        <begin position="1"/>
        <end position="30"/>
    </location>
</feature>
<feature type="region of interest" description="Disordered" evidence="2">
    <location>
        <begin position="123"/>
        <end position="324"/>
    </location>
</feature>
<feature type="compositionally biased region" description="Basic and acidic residues" evidence="2">
    <location>
        <begin position="14"/>
        <end position="30"/>
    </location>
</feature>
<feature type="compositionally biased region" description="Low complexity" evidence="2">
    <location>
        <begin position="131"/>
        <end position="141"/>
    </location>
</feature>
<feature type="compositionally biased region" description="Basic and acidic residues" evidence="2">
    <location>
        <begin position="186"/>
        <end position="215"/>
    </location>
</feature>
<feature type="compositionally biased region" description="Basic residues" evidence="2">
    <location>
        <begin position="244"/>
        <end position="253"/>
    </location>
</feature>
<feature type="compositionally biased region" description="Basic and acidic residues" evidence="2">
    <location>
        <begin position="254"/>
        <end position="270"/>
    </location>
</feature>
<feature type="compositionally biased region" description="Polar residues" evidence="2">
    <location>
        <begin position="296"/>
        <end position="309"/>
    </location>
</feature>
<feature type="compositionally biased region" description="Basic residues" evidence="2">
    <location>
        <begin position="312"/>
        <end position="324"/>
    </location>
</feature>
<feature type="sequence conflict" description="In Ref. 1; AAH79992." evidence="3" ref="1">
    <original>I</original>
    <variation>K</variation>
    <location>
        <position position="227"/>
    </location>
</feature>
<feature type="sequence conflict" description="In Ref. 1; AAH79992." evidence="3" ref="1">
    <location>
        <begin position="283"/>
        <end position="284"/>
    </location>
</feature>
<feature type="sequence conflict" description="In Ref. 1; AAH79992." evidence="3" ref="1">
    <original>N</original>
    <variation>K</variation>
    <location>
        <position position="321"/>
    </location>
</feature>
<name>GPTC4_XENLA</name>
<dbReference type="EMBL" id="BC079992">
    <property type="protein sequence ID" value="AAH79992.1"/>
    <property type="status" value="ALT_INIT"/>
    <property type="molecule type" value="mRNA"/>
</dbReference>
<dbReference type="EMBL" id="BC097554">
    <property type="protein sequence ID" value="AAH97554.1"/>
    <property type="molecule type" value="mRNA"/>
</dbReference>
<dbReference type="RefSeq" id="NP_001086457.1">
    <property type="nucleotide sequence ID" value="NM_001092988.1"/>
</dbReference>
<dbReference type="DNASU" id="446277"/>
<dbReference type="GeneID" id="446277"/>
<dbReference type="KEGG" id="xla:446277"/>
<dbReference type="AGR" id="Xenbase:XB-GENE-6251698"/>
<dbReference type="CTD" id="446277"/>
<dbReference type="Xenbase" id="XB-GENE-6251698">
    <property type="gene designation" value="gpatch4.L"/>
</dbReference>
<dbReference type="OrthoDB" id="10019757at2759"/>
<dbReference type="Proteomes" id="UP000186698">
    <property type="component" value="Chromosome 8L"/>
</dbReference>
<dbReference type="Bgee" id="446277">
    <property type="expression patterns" value="Expressed in blastula and 19 other cell types or tissues"/>
</dbReference>
<dbReference type="GO" id="GO:0005730">
    <property type="term" value="C:nucleolus"/>
    <property type="evidence" value="ECO:0000318"/>
    <property type="project" value="GO_Central"/>
</dbReference>
<dbReference type="GO" id="GO:0003676">
    <property type="term" value="F:nucleic acid binding"/>
    <property type="evidence" value="ECO:0007669"/>
    <property type="project" value="InterPro"/>
</dbReference>
<dbReference type="InterPro" id="IPR000467">
    <property type="entry name" value="G_patch_dom"/>
</dbReference>
<dbReference type="InterPro" id="IPR050656">
    <property type="entry name" value="PINX1"/>
</dbReference>
<dbReference type="PANTHER" id="PTHR23149">
    <property type="entry name" value="G PATCH DOMAIN CONTAINING PROTEIN"/>
    <property type="match status" value="1"/>
</dbReference>
<dbReference type="PANTHER" id="PTHR23149:SF9">
    <property type="entry name" value="G PATCH DOMAIN-CONTAINING PROTEIN 4"/>
    <property type="match status" value="1"/>
</dbReference>
<dbReference type="Pfam" id="PF01585">
    <property type="entry name" value="G-patch"/>
    <property type="match status" value="1"/>
</dbReference>
<dbReference type="SMART" id="SM00443">
    <property type="entry name" value="G_patch"/>
    <property type="match status" value="1"/>
</dbReference>
<dbReference type="PROSITE" id="PS50174">
    <property type="entry name" value="G_PATCH"/>
    <property type="match status" value="1"/>
</dbReference>
<organism>
    <name type="scientific">Xenopus laevis</name>
    <name type="common">African clawed frog</name>
    <dbReference type="NCBI Taxonomy" id="8355"/>
    <lineage>
        <taxon>Eukaryota</taxon>
        <taxon>Metazoa</taxon>
        <taxon>Chordata</taxon>
        <taxon>Craniata</taxon>
        <taxon>Vertebrata</taxon>
        <taxon>Euteleostomi</taxon>
        <taxon>Amphibia</taxon>
        <taxon>Batrachia</taxon>
        <taxon>Anura</taxon>
        <taxon>Pipoidea</taxon>
        <taxon>Pipidae</taxon>
        <taxon>Xenopodinae</taxon>
        <taxon>Xenopus</taxon>
        <taxon>Xenopus</taxon>
    </lineage>
</organism>
<protein>
    <recommendedName>
        <fullName>G patch domain-containing protein 4</fullName>
    </recommendedName>
</protein>
<sequence length="324" mass="36660">MSASSVKKSQGMKFAEEQMHKHGWKEGKGLGRRENGICEAIKVKVKCDHAGVGHNSAEQFTFHWWDHVFNKTASSISVEADQDGVTVNRVKDEDAPVTNKKPRKALSNKNMLYGRFVKSATLLSGGEQPVKEPSSSESSDSSGDEDEKLDLSSATKLTDEDLKKVCGGRTAHKGARHGLTMSAKLSRLEEQEREFLAKYGKKEQKNKERDEKLERTQGLPGMNIQQIYSEEGIETNISHESSQHKKKKKKRKRADSERKEESQENGHEEEQMPPSEQEVKSSKKKKSKKKQREESPSTQEEQPTESSDFSMKPKKKKKKKNKSE</sequence>
<gene>
    <name type="primary">gpatch4</name>
    <name type="synonym">gpatc4</name>
</gene>
<comment type="sequence caution" evidence="3">
    <conflict type="erroneous initiation">
        <sequence resource="EMBL-CDS" id="AAH79992"/>
    </conflict>
</comment>
<keyword id="KW-1185">Reference proteome</keyword>
<evidence type="ECO:0000255" key="1">
    <source>
        <dbReference type="PROSITE-ProRule" id="PRU00092"/>
    </source>
</evidence>
<evidence type="ECO:0000256" key="2">
    <source>
        <dbReference type="SAM" id="MobiDB-lite"/>
    </source>
</evidence>
<evidence type="ECO:0000305" key="3"/>
<proteinExistence type="evidence at transcript level"/>
<reference key="1">
    <citation type="submission" date="2005-06" db="EMBL/GenBank/DDBJ databases">
        <authorList>
            <consortium name="NIH - Xenopus Gene Collection (XGC) project"/>
        </authorList>
    </citation>
    <scope>NUCLEOTIDE SEQUENCE [LARGE SCALE MRNA]</scope>
    <source>
        <tissue>Embryo</tissue>
        <tissue>Ovary</tissue>
    </source>
</reference>